<protein>
    <recommendedName>
        <fullName evidence="1">GMP synthase [glutamine-hydrolyzing]</fullName>
        <ecNumber evidence="1">6.3.5.2</ecNumber>
    </recommendedName>
    <alternativeName>
        <fullName evidence="1">GMP synthetase</fullName>
    </alternativeName>
    <alternativeName>
        <fullName evidence="1">Glutamine amidotransferase</fullName>
    </alternativeName>
</protein>
<gene>
    <name evidence="1" type="primary">guaA</name>
    <name type="ordered locus">Plut_1946</name>
</gene>
<feature type="chain" id="PRO_0000229452" description="GMP synthase [glutamine-hydrolyzing]">
    <location>
        <begin position="1"/>
        <end position="513"/>
    </location>
</feature>
<feature type="domain" description="Glutamine amidotransferase type-1" evidence="1">
    <location>
        <begin position="3"/>
        <end position="200"/>
    </location>
</feature>
<feature type="domain" description="GMPS ATP-PPase" evidence="1">
    <location>
        <begin position="201"/>
        <end position="388"/>
    </location>
</feature>
<feature type="active site" description="Nucleophile" evidence="1">
    <location>
        <position position="80"/>
    </location>
</feature>
<feature type="active site" evidence="1">
    <location>
        <position position="174"/>
    </location>
</feature>
<feature type="active site" evidence="1">
    <location>
        <position position="176"/>
    </location>
</feature>
<feature type="binding site" evidence="1">
    <location>
        <begin position="228"/>
        <end position="234"/>
    </location>
    <ligand>
        <name>ATP</name>
        <dbReference type="ChEBI" id="CHEBI:30616"/>
    </ligand>
</feature>
<dbReference type="EC" id="6.3.5.2" evidence="1"/>
<dbReference type="EMBL" id="CP000096">
    <property type="protein sequence ID" value="ABB24788.1"/>
    <property type="molecule type" value="Genomic_DNA"/>
</dbReference>
<dbReference type="RefSeq" id="WP_011358658.1">
    <property type="nucleotide sequence ID" value="NC_007512.1"/>
</dbReference>
<dbReference type="SMR" id="Q3B1J3"/>
<dbReference type="STRING" id="319225.Plut_1946"/>
<dbReference type="MEROPS" id="C26.957"/>
<dbReference type="KEGG" id="plt:Plut_1946"/>
<dbReference type="eggNOG" id="COG0518">
    <property type="taxonomic scope" value="Bacteria"/>
</dbReference>
<dbReference type="eggNOG" id="COG0519">
    <property type="taxonomic scope" value="Bacteria"/>
</dbReference>
<dbReference type="HOGENOM" id="CLU_014340_0_5_10"/>
<dbReference type="OrthoDB" id="9802219at2"/>
<dbReference type="UniPathway" id="UPA00189">
    <property type="reaction ID" value="UER00296"/>
</dbReference>
<dbReference type="Proteomes" id="UP000002709">
    <property type="component" value="Chromosome"/>
</dbReference>
<dbReference type="GO" id="GO:0005829">
    <property type="term" value="C:cytosol"/>
    <property type="evidence" value="ECO:0007669"/>
    <property type="project" value="TreeGrafter"/>
</dbReference>
<dbReference type="GO" id="GO:0005524">
    <property type="term" value="F:ATP binding"/>
    <property type="evidence" value="ECO:0007669"/>
    <property type="project" value="UniProtKB-UniRule"/>
</dbReference>
<dbReference type="GO" id="GO:0003921">
    <property type="term" value="F:GMP synthase activity"/>
    <property type="evidence" value="ECO:0007669"/>
    <property type="project" value="InterPro"/>
</dbReference>
<dbReference type="CDD" id="cd01742">
    <property type="entry name" value="GATase1_GMP_Synthase"/>
    <property type="match status" value="1"/>
</dbReference>
<dbReference type="CDD" id="cd01997">
    <property type="entry name" value="GMP_synthase_C"/>
    <property type="match status" value="1"/>
</dbReference>
<dbReference type="FunFam" id="3.30.300.10:FF:000002">
    <property type="entry name" value="GMP synthase [glutamine-hydrolyzing]"/>
    <property type="match status" value="1"/>
</dbReference>
<dbReference type="FunFam" id="3.40.50.620:FF:000001">
    <property type="entry name" value="GMP synthase [glutamine-hydrolyzing]"/>
    <property type="match status" value="1"/>
</dbReference>
<dbReference type="FunFam" id="3.40.50.880:FF:000001">
    <property type="entry name" value="GMP synthase [glutamine-hydrolyzing]"/>
    <property type="match status" value="1"/>
</dbReference>
<dbReference type="Gene3D" id="3.30.300.10">
    <property type="match status" value="1"/>
</dbReference>
<dbReference type="Gene3D" id="3.40.50.880">
    <property type="match status" value="1"/>
</dbReference>
<dbReference type="Gene3D" id="3.40.50.620">
    <property type="entry name" value="HUPs"/>
    <property type="match status" value="1"/>
</dbReference>
<dbReference type="HAMAP" id="MF_00344">
    <property type="entry name" value="GMP_synthase"/>
    <property type="match status" value="1"/>
</dbReference>
<dbReference type="InterPro" id="IPR029062">
    <property type="entry name" value="Class_I_gatase-like"/>
</dbReference>
<dbReference type="InterPro" id="IPR017926">
    <property type="entry name" value="GATASE"/>
</dbReference>
<dbReference type="InterPro" id="IPR001674">
    <property type="entry name" value="GMP_synth_C"/>
</dbReference>
<dbReference type="InterPro" id="IPR004739">
    <property type="entry name" value="GMP_synth_GATase"/>
</dbReference>
<dbReference type="InterPro" id="IPR022955">
    <property type="entry name" value="GMP_synthase"/>
</dbReference>
<dbReference type="InterPro" id="IPR025777">
    <property type="entry name" value="GMPS_ATP_PPase_dom"/>
</dbReference>
<dbReference type="InterPro" id="IPR022310">
    <property type="entry name" value="NAD/GMP_synthase"/>
</dbReference>
<dbReference type="InterPro" id="IPR014729">
    <property type="entry name" value="Rossmann-like_a/b/a_fold"/>
</dbReference>
<dbReference type="NCBIfam" id="TIGR00884">
    <property type="entry name" value="guaA_Cterm"/>
    <property type="match status" value="1"/>
</dbReference>
<dbReference type="NCBIfam" id="TIGR00888">
    <property type="entry name" value="guaA_Nterm"/>
    <property type="match status" value="1"/>
</dbReference>
<dbReference type="NCBIfam" id="NF000848">
    <property type="entry name" value="PRK00074.1"/>
    <property type="match status" value="1"/>
</dbReference>
<dbReference type="PANTHER" id="PTHR11922:SF2">
    <property type="entry name" value="GMP SYNTHASE [GLUTAMINE-HYDROLYZING]"/>
    <property type="match status" value="1"/>
</dbReference>
<dbReference type="PANTHER" id="PTHR11922">
    <property type="entry name" value="GMP SYNTHASE-RELATED"/>
    <property type="match status" value="1"/>
</dbReference>
<dbReference type="Pfam" id="PF00117">
    <property type="entry name" value="GATase"/>
    <property type="match status" value="1"/>
</dbReference>
<dbReference type="Pfam" id="PF00958">
    <property type="entry name" value="GMP_synt_C"/>
    <property type="match status" value="1"/>
</dbReference>
<dbReference type="Pfam" id="PF02540">
    <property type="entry name" value="NAD_synthase"/>
    <property type="match status" value="1"/>
</dbReference>
<dbReference type="PRINTS" id="PR00097">
    <property type="entry name" value="ANTSNTHASEII"/>
</dbReference>
<dbReference type="PRINTS" id="PR00096">
    <property type="entry name" value="GATASE"/>
</dbReference>
<dbReference type="SUPFAM" id="SSF52402">
    <property type="entry name" value="Adenine nucleotide alpha hydrolases-like"/>
    <property type="match status" value="1"/>
</dbReference>
<dbReference type="SUPFAM" id="SSF52317">
    <property type="entry name" value="Class I glutamine amidotransferase-like"/>
    <property type="match status" value="1"/>
</dbReference>
<dbReference type="SUPFAM" id="SSF54810">
    <property type="entry name" value="GMP synthetase C-terminal dimerisation domain"/>
    <property type="match status" value="1"/>
</dbReference>
<dbReference type="PROSITE" id="PS51273">
    <property type="entry name" value="GATASE_TYPE_1"/>
    <property type="match status" value="1"/>
</dbReference>
<dbReference type="PROSITE" id="PS51553">
    <property type="entry name" value="GMPS_ATP_PPASE"/>
    <property type="match status" value="1"/>
</dbReference>
<comment type="function">
    <text evidence="1">Catalyzes the synthesis of GMP from XMP.</text>
</comment>
<comment type="catalytic activity">
    <reaction evidence="1">
        <text>XMP + L-glutamine + ATP + H2O = GMP + L-glutamate + AMP + diphosphate + 2 H(+)</text>
        <dbReference type="Rhea" id="RHEA:11680"/>
        <dbReference type="ChEBI" id="CHEBI:15377"/>
        <dbReference type="ChEBI" id="CHEBI:15378"/>
        <dbReference type="ChEBI" id="CHEBI:29985"/>
        <dbReference type="ChEBI" id="CHEBI:30616"/>
        <dbReference type="ChEBI" id="CHEBI:33019"/>
        <dbReference type="ChEBI" id="CHEBI:57464"/>
        <dbReference type="ChEBI" id="CHEBI:58115"/>
        <dbReference type="ChEBI" id="CHEBI:58359"/>
        <dbReference type="ChEBI" id="CHEBI:456215"/>
        <dbReference type="EC" id="6.3.5.2"/>
    </reaction>
</comment>
<comment type="pathway">
    <text evidence="1">Purine metabolism; GMP biosynthesis; GMP from XMP (L-Gln route): step 1/1.</text>
</comment>
<comment type="subunit">
    <text evidence="1">Homodimer.</text>
</comment>
<name>GUAA_CHLL3</name>
<accession>Q3B1J3</accession>
<reference key="1">
    <citation type="submission" date="2005-08" db="EMBL/GenBank/DDBJ databases">
        <title>Complete sequence of Pelodictyon luteolum DSM 273.</title>
        <authorList>
            <consortium name="US DOE Joint Genome Institute"/>
            <person name="Copeland A."/>
            <person name="Lucas S."/>
            <person name="Lapidus A."/>
            <person name="Barry K."/>
            <person name="Detter J.C."/>
            <person name="Glavina T."/>
            <person name="Hammon N."/>
            <person name="Israni S."/>
            <person name="Pitluck S."/>
            <person name="Bryant D."/>
            <person name="Schmutz J."/>
            <person name="Larimer F."/>
            <person name="Land M."/>
            <person name="Kyrpides N."/>
            <person name="Ivanova N."/>
            <person name="Richardson P."/>
        </authorList>
    </citation>
    <scope>NUCLEOTIDE SEQUENCE [LARGE SCALE GENOMIC DNA]</scope>
    <source>
        <strain>DSM 273 / BCRC 81028 / 2530</strain>
    </source>
</reference>
<sequence>MQSVLVLDFGSQYTQLIARRIRELGIYSEILPYSTTPEAIREHDPKAIILSGGPTSVYGESAILPHPGIFSLGLPILGICYGLQAIANHFGGAVESSSKQEFGRAKILVDRTEGHESMLFKDIPDSDVWMSHGDKVTRMPEGFQITASSGNSEMCAIESFGPKAALKIYGLQFHPEVQHTLYGKQLLSNFLINIAGIRPDWSSKSFIEHQIEDIRQRADKGTVICGISGGVDSTVAAVLVSKAIGKQLHCVFVDNGLLRKNEARKVMEFLKPLGLNITLADSADLFLGRLKGVASPEKKRKIIGRTFIRVFEEHINEEKFLVQGTLYPDVIESQSVKGPSETIKSHHNVGGLPKRMKLKLIEPLRELFKDEVRAVGRELGIPEDILMRHPFPGPGLAVRVLGSLTRERLDILREADEIYIDELKSSGLYQQVWQAFSVLLPVQSVGVMGDKRTYENVLALRAVESTDGMTADWAHLPHDFLAKVSNRIINEVRGINRVAYDISSKPPATIEWE</sequence>
<organism>
    <name type="scientific">Chlorobium luteolum (strain DSM 273 / BCRC 81028 / 2530)</name>
    <name type="common">Pelodictyon luteolum</name>
    <dbReference type="NCBI Taxonomy" id="319225"/>
    <lineage>
        <taxon>Bacteria</taxon>
        <taxon>Pseudomonadati</taxon>
        <taxon>Chlorobiota</taxon>
        <taxon>Chlorobiia</taxon>
        <taxon>Chlorobiales</taxon>
        <taxon>Chlorobiaceae</taxon>
        <taxon>Chlorobium/Pelodictyon group</taxon>
        <taxon>Pelodictyon</taxon>
    </lineage>
</organism>
<evidence type="ECO:0000255" key="1">
    <source>
        <dbReference type="HAMAP-Rule" id="MF_00344"/>
    </source>
</evidence>
<keyword id="KW-0067">ATP-binding</keyword>
<keyword id="KW-0315">Glutamine amidotransferase</keyword>
<keyword id="KW-0332">GMP biosynthesis</keyword>
<keyword id="KW-0436">Ligase</keyword>
<keyword id="KW-0547">Nucleotide-binding</keyword>
<keyword id="KW-0658">Purine biosynthesis</keyword>
<keyword id="KW-1185">Reference proteome</keyword>
<proteinExistence type="inferred from homology"/>